<gene>
    <name type="ordered locus">LCA_1475</name>
</gene>
<comment type="function">
    <text evidence="1">Has nucleoside phosphatase activity towards nucleoside triphosphates and nucleoside diphosphates.</text>
</comment>
<comment type="catalytic activity">
    <reaction evidence="1">
        <text>a ribonucleoside 5'-triphosphate + H2O = a ribonucleoside 5'-diphosphate + phosphate + H(+)</text>
        <dbReference type="Rhea" id="RHEA:23680"/>
        <dbReference type="ChEBI" id="CHEBI:15377"/>
        <dbReference type="ChEBI" id="CHEBI:15378"/>
        <dbReference type="ChEBI" id="CHEBI:43474"/>
        <dbReference type="ChEBI" id="CHEBI:57930"/>
        <dbReference type="ChEBI" id="CHEBI:61557"/>
        <dbReference type="EC" id="3.6.1.15"/>
    </reaction>
</comment>
<comment type="catalytic activity">
    <reaction evidence="1">
        <text>a ribonucleoside 5'-diphosphate + H2O = a ribonucleoside 5'-phosphate + phosphate + H(+)</text>
        <dbReference type="Rhea" id="RHEA:36799"/>
        <dbReference type="ChEBI" id="CHEBI:15377"/>
        <dbReference type="ChEBI" id="CHEBI:15378"/>
        <dbReference type="ChEBI" id="CHEBI:43474"/>
        <dbReference type="ChEBI" id="CHEBI:57930"/>
        <dbReference type="ChEBI" id="CHEBI:58043"/>
        <dbReference type="EC" id="3.6.1.6"/>
    </reaction>
</comment>
<comment type="cofactor">
    <cofactor evidence="1">
        <name>Mg(2+)</name>
        <dbReference type="ChEBI" id="CHEBI:18420"/>
    </cofactor>
</comment>
<comment type="similarity">
    <text evidence="1">Belongs to the Ntdp family.</text>
</comment>
<dbReference type="EC" id="3.6.1.15" evidence="1"/>
<dbReference type="EC" id="3.6.1.6" evidence="1"/>
<dbReference type="EMBL" id="CR936503">
    <property type="protein sequence ID" value="CAI55777.1"/>
    <property type="molecule type" value="Genomic_DNA"/>
</dbReference>
<dbReference type="SMR" id="Q38VK6"/>
<dbReference type="STRING" id="314315.LCA_1475"/>
<dbReference type="KEGG" id="lsa:LCA_1475"/>
<dbReference type="eggNOG" id="COG3557">
    <property type="taxonomic scope" value="Bacteria"/>
</dbReference>
<dbReference type="HOGENOM" id="CLU_109787_1_0_9"/>
<dbReference type="Proteomes" id="UP000002707">
    <property type="component" value="Chromosome"/>
</dbReference>
<dbReference type="GO" id="GO:0000287">
    <property type="term" value="F:magnesium ion binding"/>
    <property type="evidence" value="ECO:0007669"/>
    <property type="project" value="UniProtKB-UniRule"/>
</dbReference>
<dbReference type="GO" id="GO:0017110">
    <property type="term" value="F:nucleoside diphosphate phosphatase activity"/>
    <property type="evidence" value="ECO:0007669"/>
    <property type="project" value="UniProtKB-UniRule"/>
</dbReference>
<dbReference type="GO" id="GO:0017111">
    <property type="term" value="F:ribonucleoside triphosphate phosphatase activity"/>
    <property type="evidence" value="ECO:0007669"/>
    <property type="project" value="UniProtKB-UniRule"/>
</dbReference>
<dbReference type="Gene3D" id="2.40.380.10">
    <property type="entry name" value="FomD-like"/>
    <property type="match status" value="1"/>
</dbReference>
<dbReference type="HAMAP" id="MF_01568">
    <property type="entry name" value="Ntdp"/>
    <property type="match status" value="1"/>
</dbReference>
<dbReference type="InterPro" id="IPR007295">
    <property type="entry name" value="DUF402"/>
</dbReference>
<dbReference type="InterPro" id="IPR035930">
    <property type="entry name" value="FomD-like_sf"/>
</dbReference>
<dbReference type="InterPro" id="IPR050212">
    <property type="entry name" value="Ntdp-like"/>
</dbReference>
<dbReference type="InterPro" id="IPR016882">
    <property type="entry name" value="SA1684"/>
</dbReference>
<dbReference type="NCBIfam" id="NF010183">
    <property type="entry name" value="PRK13662.1"/>
    <property type="match status" value="1"/>
</dbReference>
<dbReference type="PANTHER" id="PTHR39159">
    <property type="match status" value="1"/>
</dbReference>
<dbReference type="PANTHER" id="PTHR39159:SF1">
    <property type="entry name" value="UPF0374 PROTEIN YGAC"/>
    <property type="match status" value="1"/>
</dbReference>
<dbReference type="Pfam" id="PF04167">
    <property type="entry name" value="DUF402"/>
    <property type="match status" value="1"/>
</dbReference>
<dbReference type="PIRSF" id="PIRSF028345">
    <property type="entry name" value="UCP028345"/>
    <property type="match status" value="1"/>
</dbReference>
<dbReference type="SUPFAM" id="SSF159234">
    <property type="entry name" value="FomD-like"/>
    <property type="match status" value="1"/>
</dbReference>
<accession>Q38VK6</accession>
<proteinExistence type="inferred from homology"/>
<protein>
    <recommendedName>
        <fullName evidence="1">Nucleoside triphosphate/diphosphate phosphatase</fullName>
        <ecNumber evidence="1">3.6.1.15</ecNumber>
        <ecNumber evidence="1">3.6.1.6</ecNumber>
    </recommendedName>
</protein>
<reference key="1">
    <citation type="journal article" date="2005" name="Nat. Biotechnol.">
        <title>The complete genome sequence of the meat-borne lactic acid bacterium Lactobacillus sakei 23K.</title>
        <authorList>
            <person name="Chaillou S."/>
            <person name="Champomier-Verges M.-C."/>
            <person name="Cornet M."/>
            <person name="Crutz-Le Coq A.-M."/>
            <person name="Dudez A.-M."/>
            <person name="Martin V."/>
            <person name="Beaufils S."/>
            <person name="Darbon-Rongere E."/>
            <person name="Bossy R."/>
            <person name="Loux V."/>
            <person name="Zagorec M."/>
        </authorList>
    </citation>
    <scope>NUCLEOTIDE SEQUENCE [LARGE SCALE GENOMIC DNA]</scope>
    <source>
        <strain>23K</strain>
    </source>
</reference>
<feature type="chain" id="PRO_0000248099" description="Nucleoside triphosphate/diphosphate phosphatase">
    <location>
        <begin position="1"/>
        <end position="178"/>
    </location>
</feature>
<feature type="active site" description="Proton donor" evidence="1">
    <location>
        <position position="23"/>
    </location>
</feature>
<feature type="binding site" evidence="1">
    <location>
        <position position="87"/>
    </location>
    <ligand>
        <name>Mg(2+)</name>
        <dbReference type="ChEBI" id="CHEBI:18420"/>
        <label>1</label>
    </ligand>
</feature>
<feature type="binding site" evidence="1">
    <location>
        <position position="103"/>
    </location>
    <ligand>
        <name>Mg(2+)</name>
        <dbReference type="ChEBI" id="CHEBI:18420"/>
        <label>1</label>
    </ligand>
</feature>
<feature type="binding site" evidence="1">
    <location>
        <position position="105"/>
    </location>
    <ligand>
        <name>Mg(2+)</name>
        <dbReference type="ChEBI" id="CHEBI:18420"/>
        <label>2</label>
    </ligand>
</feature>
<feature type="binding site" evidence="1">
    <location>
        <position position="107"/>
    </location>
    <ligand>
        <name>Mg(2+)</name>
        <dbReference type="ChEBI" id="CHEBI:18420"/>
        <label>1</label>
    </ligand>
</feature>
<feature type="binding site" evidence="1">
    <location>
        <position position="107"/>
    </location>
    <ligand>
        <name>Mg(2+)</name>
        <dbReference type="ChEBI" id="CHEBI:18420"/>
        <label>2</label>
    </ligand>
</feature>
<feature type="binding site" evidence="1">
    <location>
        <position position="120"/>
    </location>
    <ligand>
        <name>Mg(2+)</name>
        <dbReference type="ChEBI" id="CHEBI:18420"/>
        <label>2</label>
    </ligand>
</feature>
<feature type="binding site" evidence="1">
    <location>
        <position position="123"/>
    </location>
    <ligand>
        <name>Mg(2+)</name>
        <dbReference type="ChEBI" id="CHEBI:18420"/>
        <label>2</label>
    </ligand>
</feature>
<organism>
    <name type="scientific">Latilactobacillus sakei subsp. sakei (strain 23K)</name>
    <name type="common">Lactobacillus sakei subsp. sakei</name>
    <dbReference type="NCBI Taxonomy" id="314315"/>
    <lineage>
        <taxon>Bacteria</taxon>
        <taxon>Bacillati</taxon>
        <taxon>Bacillota</taxon>
        <taxon>Bacilli</taxon>
        <taxon>Lactobacillales</taxon>
        <taxon>Lactobacillaceae</taxon>
        <taxon>Latilactobacillus</taxon>
    </lineage>
</organism>
<keyword id="KW-0378">Hydrolase</keyword>
<keyword id="KW-0460">Magnesium</keyword>
<keyword id="KW-0479">Metal-binding</keyword>
<keyword id="KW-1185">Reference proteome</keyword>
<evidence type="ECO:0000255" key="1">
    <source>
        <dbReference type="HAMAP-Rule" id="MF_01568"/>
    </source>
</evidence>
<sequence>MNAPKEGDYIAIQSYKHDGSLHRTWRDTMVLKTSENAVIGCNDHTLVTESDGRKWVTREPALIYFHKKYWFNVVAMIREGGVSYYCNLASPHVMDQEALKYIDYDLDVKVFPNGEKRLLDVDEYEAHSAKWHYSAETDRILKANVKVLVDWINNGKGPFSKEYIDIWYNRYQELAHHR</sequence>
<name>NTDP_LATSS</name>